<protein>
    <recommendedName>
        <fullName evidence="1">Ribosome maturation factor RimM</fullName>
    </recommendedName>
</protein>
<feature type="chain" id="PRO_0000244138" description="Ribosome maturation factor RimM">
    <location>
        <begin position="1"/>
        <end position="176"/>
    </location>
</feature>
<feature type="domain" description="PRC barrel" evidence="1">
    <location>
        <begin position="101"/>
        <end position="174"/>
    </location>
</feature>
<name>RIMM_MOOTA</name>
<sequence length="176" mass="19384">MDTERIGVGKIIGTHGIRGEVKVFPLTDFPERFRPGTRLILEQEGADGREGRTFPVTVISVRPGKGNLILKLAEINDADQAGAVRGATLKVEPWEVEPLPEGHYYIYQLLGSRVYTTGGEFLGILRDILATGANDVYVVRNEDAGEILIPALKTVVRQVDLARKEIRVELPPGLRD</sequence>
<evidence type="ECO:0000255" key="1">
    <source>
        <dbReference type="HAMAP-Rule" id="MF_00014"/>
    </source>
</evidence>
<gene>
    <name evidence="1" type="primary">rimM</name>
    <name type="ordered locus">Moth_0969</name>
</gene>
<reference key="1">
    <citation type="journal article" date="2008" name="Environ. Microbiol.">
        <title>The complete genome sequence of Moorella thermoacetica (f. Clostridium thermoaceticum).</title>
        <authorList>
            <person name="Pierce E."/>
            <person name="Xie G."/>
            <person name="Barabote R.D."/>
            <person name="Saunders E."/>
            <person name="Han C.S."/>
            <person name="Detter J.C."/>
            <person name="Richardson P."/>
            <person name="Brettin T.S."/>
            <person name="Das A."/>
            <person name="Ljungdahl L.G."/>
            <person name="Ragsdale S.W."/>
        </authorList>
    </citation>
    <scope>NUCLEOTIDE SEQUENCE [LARGE SCALE GENOMIC DNA]</scope>
    <source>
        <strain>ATCC 39073 / JCM 9320</strain>
    </source>
</reference>
<organism>
    <name type="scientific">Moorella thermoacetica (strain ATCC 39073 / JCM 9320)</name>
    <dbReference type="NCBI Taxonomy" id="264732"/>
    <lineage>
        <taxon>Bacteria</taxon>
        <taxon>Bacillati</taxon>
        <taxon>Bacillota</taxon>
        <taxon>Clostridia</taxon>
        <taxon>Moorellales</taxon>
        <taxon>Moorellaceae</taxon>
        <taxon>Moorella</taxon>
    </lineage>
</organism>
<comment type="function">
    <text evidence="1">An accessory protein needed during the final step in the assembly of 30S ribosomal subunit, possibly for assembly of the head region. Essential for efficient processing of 16S rRNA. May be needed both before and after RbfA during the maturation of 16S rRNA. It has affinity for free ribosomal 30S subunits but not for 70S ribosomes.</text>
</comment>
<comment type="subunit">
    <text evidence="1">Binds ribosomal protein uS19.</text>
</comment>
<comment type="subcellular location">
    <subcellularLocation>
        <location evidence="1">Cytoplasm</location>
    </subcellularLocation>
</comment>
<comment type="domain">
    <text evidence="1">The PRC barrel domain binds ribosomal protein uS19.</text>
</comment>
<comment type="similarity">
    <text evidence="1">Belongs to the RimM family.</text>
</comment>
<dbReference type="EMBL" id="CP000232">
    <property type="protein sequence ID" value="ABC19284.1"/>
    <property type="molecule type" value="Genomic_DNA"/>
</dbReference>
<dbReference type="RefSeq" id="YP_429827.1">
    <property type="nucleotide sequence ID" value="NC_007644.1"/>
</dbReference>
<dbReference type="SMR" id="Q2RJV5"/>
<dbReference type="STRING" id="264732.Moth_0969"/>
<dbReference type="EnsemblBacteria" id="ABC19284">
    <property type="protein sequence ID" value="ABC19284"/>
    <property type="gene ID" value="Moth_0969"/>
</dbReference>
<dbReference type="KEGG" id="mta:Moth_0969"/>
<dbReference type="PATRIC" id="fig|264732.11.peg.1043"/>
<dbReference type="eggNOG" id="COG0806">
    <property type="taxonomic scope" value="Bacteria"/>
</dbReference>
<dbReference type="HOGENOM" id="CLU_077636_3_1_9"/>
<dbReference type="OrthoDB" id="9810331at2"/>
<dbReference type="GO" id="GO:0005737">
    <property type="term" value="C:cytoplasm"/>
    <property type="evidence" value="ECO:0007669"/>
    <property type="project" value="UniProtKB-SubCell"/>
</dbReference>
<dbReference type="GO" id="GO:0005840">
    <property type="term" value="C:ribosome"/>
    <property type="evidence" value="ECO:0007669"/>
    <property type="project" value="InterPro"/>
</dbReference>
<dbReference type="GO" id="GO:0043022">
    <property type="term" value="F:ribosome binding"/>
    <property type="evidence" value="ECO:0007669"/>
    <property type="project" value="InterPro"/>
</dbReference>
<dbReference type="GO" id="GO:0042274">
    <property type="term" value="P:ribosomal small subunit biogenesis"/>
    <property type="evidence" value="ECO:0007669"/>
    <property type="project" value="UniProtKB-UniRule"/>
</dbReference>
<dbReference type="GO" id="GO:0006364">
    <property type="term" value="P:rRNA processing"/>
    <property type="evidence" value="ECO:0007669"/>
    <property type="project" value="UniProtKB-UniRule"/>
</dbReference>
<dbReference type="Gene3D" id="2.30.30.240">
    <property type="entry name" value="PRC-barrel domain"/>
    <property type="match status" value="1"/>
</dbReference>
<dbReference type="Gene3D" id="2.40.30.60">
    <property type="entry name" value="RimM"/>
    <property type="match status" value="1"/>
</dbReference>
<dbReference type="HAMAP" id="MF_00014">
    <property type="entry name" value="Ribosome_mat_RimM"/>
    <property type="match status" value="1"/>
</dbReference>
<dbReference type="InterPro" id="IPR011033">
    <property type="entry name" value="PRC_barrel-like_sf"/>
</dbReference>
<dbReference type="InterPro" id="IPR056792">
    <property type="entry name" value="PRC_RimM"/>
</dbReference>
<dbReference type="InterPro" id="IPR011961">
    <property type="entry name" value="RimM"/>
</dbReference>
<dbReference type="InterPro" id="IPR002676">
    <property type="entry name" value="RimM_N"/>
</dbReference>
<dbReference type="InterPro" id="IPR036976">
    <property type="entry name" value="RimM_N_sf"/>
</dbReference>
<dbReference type="InterPro" id="IPR009000">
    <property type="entry name" value="Transl_B-barrel_sf"/>
</dbReference>
<dbReference type="NCBIfam" id="TIGR02273">
    <property type="entry name" value="16S_RimM"/>
    <property type="match status" value="1"/>
</dbReference>
<dbReference type="PANTHER" id="PTHR33692">
    <property type="entry name" value="RIBOSOME MATURATION FACTOR RIMM"/>
    <property type="match status" value="1"/>
</dbReference>
<dbReference type="PANTHER" id="PTHR33692:SF1">
    <property type="entry name" value="RIBOSOME MATURATION FACTOR RIMM"/>
    <property type="match status" value="1"/>
</dbReference>
<dbReference type="Pfam" id="PF24986">
    <property type="entry name" value="PRC_RimM"/>
    <property type="match status" value="1"/>
</dbReference>
<dbReference type="Pfam" id="PF01782">
    <property type="entry name" value="RimM"/>
    <property type="match status" value="1"/>
</dbReference>
<dbReference type="SUPFAM" id="SSF50346">
    <property type="entry name" value="PRC-barrel domain"/>
    <property type="match status" value="1"/>
</dbReference>
<dbReference type="SUPFAM" id="SSF50447">
    <property type="entry name" value="Translation proteins"/>
    <property type="match status" value="1"/>
</dbReference>
<proteinExistence type="inferred from homology"/>
<keyword id="KW-0143">Chaperone</keyword>
<keyword id="KW-0963">Cytoplasm</keyword>
<keyword id="KW-0690">Ribosome biogenesis</keyword>
<keyword id="KW-0698">rRNA processing</keyword>
<accession>Q2RJV5</accession>